<feature type="signal peptide" evidence="1">
    <location>
        <begin position="1"/>
        <end position="21"/>
    </location>
</feature>
<feature type="chain" id="PRO_5006058630" description="Secreted RxLR effector protein RXLR-C05">
    <location>
        <begin position="22"/>
        <end position="244"/>
    </location>
</feature>
<feature type="region of interest" description="Disordered" evidence="2">
    <location>
        <begin position="37"/>
        <end position="56"/>
    </location>
</feature>
<feature type="short sequence motif" description="RxLR-dEER" evidence="6">
    <location>
        <begin position="50"/>
        <end position="68"/>
    </location>
</feature>
<feature type="compositionally biased region" description="Basic and acidic residues" evidence="2">
    <location>
        <begin position="37"/>
        <end position="46"/>
    </location>
</feature>
<gene>
    <name evidence="4" type="primary">RXLR-C05</name>
</gene>
<organism>
    <name type="scientific">Plasmopara halstedii</name>
    <name type="common">Downy mildew of sunflower</name>
    <dbReference type="NCBI Taxonomy" id="4781"/>
    <lineage>
        <taxon>Eukaryota</taxon>
        <taxon>Sar</taxon>
        <taxon>Stramenopiles</taxon>
        <taxon>Oomycota</taxon>
        <taxon>Peronosporales</taxon>
        <taxon>Peronosporaceae</taxon>
        <taxon>Plasmopara</taxon>
    </lineage>
</organism>
<name>RLR05_PLAHL</name>
<accession>A0A0P1AFH7</accession>
<protein>
    <recommendedName>
        <fullName evidence="4">Secreted RxLR effector protein RXLR-C05</fullName>
    </recommendedName>
</protein>
<evidence type="ECO:0000255" key="1"/>
<evidence type="ECO:0000256" key="2">
    <source>
        <dbReference type="SAM" id="MobiDB-lite"/>
    </source>
</evidence>
<evidence type="ECO:0000269" key="3">
    <source>
    </source>
</evidence>
<evidence type="ECO:0000303" key="4">
    <source>
    </source>
</evidence>
<evidence type="ECO:0000305" key="5"/>
<evidence type="ECO:0000305" key="6">
    <source>
    </source>
</evidence>
<sequence length="244" mass="26933">MRGAFYVATAFLIASSTRTAAESVQIKSEITQDLDKLPVGDSDTKSLPRRSLKGSGDRLEIPVAEEERVIPTGVLEGAGKDVSEAILRLEKSGDDLNKMVKVGEGVGSSATSKGKRIQIFQKSHKDAVAEHQQVFDTYKHAIKKNEALELERDTALIKSHNWKLLSDYFSAQAAKDTKNYHNYHTIFSQLDSVVTPATASYKGIKNTREKYLALLEESFSRANAAKHAGNMDEYNEIQVTVAEL</sequence>
<dbReference type="EMBL" id="CCYD01000357">
    <property type="protein sequence ID" value="CEG39174.1"/>
    <property type="molecule type" value="Genomic_DNA"/>
</dbReference>
<dbReference type="SMR" id="A0A0P1AFH7"/>
<dbReference type="EnsemblProtists" id="CEG39174">
    <property type="protein sequence ID" value="CEG39174"/>
    <property type="gene ID" value="CEG39174"/>
</dbReference>
<dbReference type="Proteomes" id="UP000054928">
    <property type="component" value="Unassembled WGS sequence"/>
</dbReference>
<dbReference type="GO" id="GO:0005576">
    <property type="term" value="C:extracellular region"/>
    <property type="evidence" value="ECO:0007669"/>
    <property type="project" value="UniProtKB-SubCell"/>
</dbReference>
<dbReference type="GO" id="GO:0030430">
    <property type="term" value="C:host cell cytoplasm"/>
    <property type="evidence" value="ECO:0007669"/>
    <property type="project" value="UniProtKB-SubCell"/>
</dbReference>
<dbReference type="GO" id="GO:0042025">
    <property type="term" value="C:host cell nucleus"/>
    <property type="evidence" value="ECO:0007669"/>
    <property type="project" value="UniProtKB-SubCell"/>
</dbReference>
<proteinExistence type="evidence at transcript level"/>
<comment type="function">
    <text evidence="3">Secreted effector that suppresses pattern-triggered immunity (PTI) in plant host.</text>
</comment>
<comment type="subcellular location">
    <subcellularLocation>
        <location evidence="3">Secreted</location>
    </subcellularLocation>
    <subcellularLocation>
        <location evidence="3">Host cytoplasm</location>
    </subcellularLocation>
    <subcellularLocation>
        <location evidence="3">Host nucleus</location>
    </subcellularLocation>
</comment>
<comment type="induction">
    <text evidence="3">Expression is up-regulated during the early plant infection stages.</text>
</comment>
<comment type="domain">
    <text evidence="6">The RxLR-dEER motif acts to carry the protein into the host cell cytoplasm through binding to cell surface phosphatidylinositol-3-phosphate.</text>
</comment>
<comment type="similarity">
    <text evidence="5">Belongs to the RxLR effector family.</text>
</comment>
<reference key="1">
    <citation type="journal article" date="2015" name="BMC Genomics">
        <title>Genome analyses of the sunflower pathogen Plasmopara halstedii provide insights into effector evolution in downy mildews and Phytophthora.</title>
        <authorList>
            <person name="Sharma R."/>
            <person name="Xia X."/>
            <person name="Cano L.M."/>
            <person name="Evangelisti E."/>
            <person name="Kemen E."/>
            <person name="Judelson H."/>
            <person name="Oome S."/>
            <person name="Sambles C."/>
            <person name="van den Hoogen D.J."/>
            <person name="Kitner M."/>
            <person name="Klein J."/>
            <person name="Meijer H.J."/>
            <person name="Spring O."/>
            <person name="Win J."/>
            <person name="Zipper R."/>
            <person name="Bode H.B."/>
            <person name="Govers F."/>
            <person name="Kamoun S."/>
            <person name="Schornack S."/>
            <person name="Studholme D.J."/>
            <person name="Van den Ackerveken G."/>
            <person name="Thines M."/>
        </authorList>
    </citation>
    <scope>NUCLEOTIDE SEQUENCE [LARGE SCALE GENOMIC DNA]</scope>
</reference>
<reference key="2">
    <citation type="journal article" date="2019" name="Plant J.">
        <title>Sunflower resistance to multiple downy mildew pathotypes revealed by recognition of conserved effectors of the oomycete Plasmopara halstedii.</title>
        <authorList>
            <person name="Pecrix Y."/>
            <person name="Buendia L."/>
            <person name="Penouilh-Suzette C."/>
            <person name="Marechaux M."/>
            <person name="Legrand L."/>
            <person name="Bouchez O."/>
            <person name="Rengel D."/>
            <person name="Gouzy J."/>
            <person name="Cottret L."/>
            <person name="Vear F."/>
            <person name="Godiard L."/>
        </authorList>
    </citation>
    <scope>DOMAIN</scope>
    <scope>INDUCTION</scope>
    <scope>FUNCTION</scope>
    <scope>SUBCELLULAR LOCATION</scope>
</reference>
<keyword id="KW-1035">Host cytoplasm</keyword>
<keyword id="KW-1048">Host nucleus</keyword>
<keyword id="KW-1185">Reference proteome</keyword>
<keyword id="KW-0964">Secreted</keyword>
<keyword id="KW-0732">Signal</keyword>
<keyword id="KW-0843">Virulence</keyword>